<reference key="1">
    <citation type="submission" date="2008-03" db="EMBL/GenBank/DDBJ databases">
        <title>Annotation of Ixodes scapularis.</title>
        <authorList>
            <consortium name="Ixodes scapularis Genome Project Consortium"/>
            <person name="Caler E."/>
            <person name="Hannick L.I."/>
            <person name="Bidwell S."/>
            <person name="Joardar V."/>
            <person name="Thiagarajan M."/>
            <person name="Amedeo P."/>
            <person name="Galinsky K.J."/>
            <person name="Schobel S."/>
            <person name="Inman J."/>
            <person name="Hostetler J."/>
            <person name="Miller J."/>
            <person name="Hammond M."/>
            <person name="Megy K."/>
            <person name="Lawson D."/>
            <person name="Kodira C."/>
            <person name="Sutton G."/>
            <person name="Meyer J."/>
            <person name="Hill C.A."/>
            <person name="Birren B."/>
            <person name="Nene V."/>
            <person name="Collins F."/>
            <person name="Alarcon-Chaidez F."/>
            <person name="Wikel S."/>
            <person name="Strausberg R."/>
        </authorList>
    </citation>
    <scope>NUCLEOTIDE SEQUENCE [LARGE SCALE GENOMIC DNA]</scope>
    <source>
        <strain>Wikel</strain>
    </source>
</reference>
<accession>B7PY76</accession>
<proteinExistence type="inferred from homology"/>
<sequence>MGETAQIQAKFFTKDERYSVPDTPFSIAGSTTPEQLSSLINALLKESSASPDQDEQPAFDFLINGELLRLTLEEHLETKEIPQETIVHLEYLEKCPPPSPVDSLIHDDWVSAVHASEAGILSGCYDNTLHIWDTATGTRRLTIPGHLGPIKSVKWVAVAEPPCTFVSTSHDETAMLWQWDRRTNAVESVQVCRGHARSVDCVDVSWNGAKFVTGSFDHMLKVWSADPDSTDTDHGQDGSEEGSRKKQKTVDGKAKTRVPVLTLAGHHEAVTGVQWTDEGEVATCSMDHTLRIWDVELGGMKSQLAGSKAFLGISYSRLNRQIVSASSDRHVRLWDPRTKDGTIVKCSYTSHAGWVSAVHWAPNSDHQFISGSYDTLMKLWDARSPKAPLYDMSGHEDKVLAVDWSLGKYMISGGADNQLKIFEHK</sequence>
<feature type="chain" id="PRO_0000369567" description="Ribosome biogenesis protein WDR12 homolog">
    <location>
        <begin position="1"/>
        <end position="425"/>
    </location>
</feature>
<feature type="repeat" description="WD 1">
    <location>
        <begin position="105"/>
        <end position="142"/>
    </location>
</feature>
<feature type="repeat" description="WD 2">
    <location>
        <begin position="145"/>
        <end position="187"/>
    </location>
</feature>
<feature type="repeat" description="WD 3">
    <location>
        <begin position="194"/>
        <end position="233"/>
    </location>
</feature>
<feature type="repeat" description="WD 4">
    <location>
        <begin position="265"/>
        <end position="303"/>
    </location>
</feature>
<feature type="repeat" description="WD 5">
    <location>
        <begin position="305"/>
        <end position="344"/>
    </location>
</feature>
<feature type="repeat" description="WD 6">
    <location>
        <begin position="350"/>
        <end position="390"/>
    </location>
</feature>
<feature type="repeat" description="WD 7">
    <location>
        <begin position="394"/>
        <end position="425"/>
    </location>
</feature>
<feature type="region of interest" description="Ubiquitin-like (UBL) domain" evidence="1">
    <location>
        <begin position="7"/>
        <end position="93"/>
    </location>
</feature>
<feature type="region of interest" description="Disordered" evidence="2">
    <location>
        <begin position="227"/>
        <end position="253"/>
    </location>
</feature>
<feature type="compositionally biased region" description="Basic and acidic residues" evidence="2">
    <location>
        <begin position="231"/>
        <end position="253"/>
    </location>
</feature>
<comment type="function">
    <text evidence="1">Required for maturation of ribosomal RNAs and formation of the large ribosomal subunit.</text>
</comment>
<comment type="subcellular location">
    <subcellularLocation>
        <location evidence="1">Nucleus</location>
        <location evidence="1">Nucleolus</location>
    </subcellularLocation>
    <subcellularLocation>
        <location evidence="1">Nucleus</location>
        <location evidence="1">Nucleoplasm</location>
    </subcellularLocation>
</comment>
<comment type="similarity">
    <text evidence="1">Belongs to the WD repeat WDR12/YTM1 family.</text>
</comment>
<name>WDR12_IXOSC</name>
<keyword id="KW-0539">Nucleus</keyword>
<keyword id="KW-1185">Reference proteome</keyword>
<keyword id="KW-0677">Repeat</keyword>
<keyword id="KW-0690">Ribosome biogenesis</keyword>
<keyword id="KW-0698">rRNA processing</keyword>
<keyword id="KW-0853">WD repeat</keyword>
<dbReference type="EMBL" id="DS818268">
    <property type="protein sequence ID" value="EEC11548.1"/>
    <property type="molecule type" value="Genomic_DNA"/>
</dbReference>
<dbReference type="RefSeq" id="XP_002402666.1">
    <property type="nucleotide sequence ID" value="XM_002402622.1"/>
</dbReference>
<dbReference type="SMR" id="B7PY76"/>
<dbReference type="FunCoup" id="B7PY76">
    <property type="interactions" value="1310"/>
</dbReference>
<dbReference type="STRING" id="6945.B7PY76"/>
<dbReference type="PaxDb" id="6945-B7PY76"/>
<dbReference type="EnsemblMetazoa" id="ISCW009002-RA">
    <property type="protein sequence ID" value="ISCW009002-PA"/>
    <property type="gene ID" value="ISCW009002"/>
</dbReference>
<dbReference type="VEuPathDB" id="VectorBase:ISCI009002"/>
<dbReference type="VEuPathDB" id="VectorBase:ISCP_029720"/>
<dbReference type="VEuPathDB" id="VectorBase:ISCW009002"/>
<dbReference type="HOGENOM" id="CLU_000288_57_0_1"/>
<dbReference type="InParanoid" id="B7PY76"/>
<dbReference type="OrthoDB" id="10251381at2759"/>
<dbReference type="PhylomeDB" id="B7PY76"/>
<dbReference type="Proteomes" id="UP000001555">
    <property type="component" value="Unassembled WGS sequence"/>
</dbReference>
<dbReference type="GO" id="GO:0005730">
    <property type="term" value="C:nucleolus"/>
    <property type="evidence" value="ECO:0007669"/>
    <property type="project" value="UniProtKB-SubCell"/>
</dbReference>
<dbReference type="GO" id="GO:0005654">
    <property type="term" value="C:nucleoplasm"/>
    <property type="evidence" value="ECO:0007669"/>
    <property type="project" value="UniProtKB-SubCell"/>
</dbReference>
<dbReference type="GO" id="GO:0030687">
    <property type="term" value="C:preribosome, large subunit precursor"/>
    <property type="evidence" value="ECO:0007669"/>
    <property type="project" value="UniProtKB-UniRule"/>
</dbReference>
<dbReference type="GO" id="GO:0043021">
    <property type="term" value="F:ribonucleoprotein complex binding"/>
    <property type="evidence" value="ECO:0007669"/>
    <property type="project" value="UniProtKB-UniRule"/>
</dbReference>
<dbReference type="GO" id="GO:0000466">
    <property type="term" value="P:maturation of 5.8S rRNA from tricistronic rRNA transcript (SSU-rRNA, 5.8S rRNA, LSU-rRNA)"/>
    <property type="evidence" value="ECO:0007669"/>
    <property type="project" value="UniProtKB-UniRule"/>
</dbReference>
<dbReference type="GO" id="GO:0000463">
    <property type="term" value="P:maturation of LSU-rRNA from tricistronic rRNA transcript (SSU-rRNA, 5.8S rRNA, LSU-rRNA)"/>
    <property type="evidence" value="ECO:0007669"/>
    <property type="project" value="UniProtKB-UniRule"/>
</dbReference>
<dbReference type="CDD" id="cd00200">
    <property type="entry name" value="WD40"/>
    <property type="match status" value="1"/>
</dbReference>
<dbReference type="FunFam" id="2.130.10.10:FF:001898">
    <property type="entry name" value="Ribosome biogenesis protein WDR12 homolog"/>
    <property type="match status" value="1"/>
</dbReference>
<dbReference type="Gene3D" id="2.130.10.10">
    <property type="entry name" value="YVTN repeat-like/Quinoprotein amine dehydrogenase"/>
    <property type="match status" value="1"/>
</dbReference>
<dbReference type="HAMAP" id="MF_03029">
    <property type="entry name" value="WDR12"/>
    <property type="match status" value="1"/>
</dbReference>
<dbReference type="InterPro" id="IPR020472">
    <property type="entry name" value="G-protein_beta_WD-40_rep"/>
</dbReference>
<dbReference type="InterPro" id="IPR012972">
    <property type="entry name" value="NLE"/>
</dbReference>
<dbReference type="InterPro" id="IPR015943">
    <property type="entry name" value="WD40/YVTN_repeat-like_dom_sf"/>
</dbReference>
<dbReference type="InterPro" id="IPR019775">
    <property type="entry name" value="WD40_repeat_CS"/>
</dbReference>
<dbReference type="InterPro" id="IPR036322">
    <property type="entry name" value="WD40_repeat_dom_sf"/>
</dbReference>
<dbReference type="InterPro" id="IPR001680">
    <property type="entry name" value="WD40_rpt"/>
</dbReference>
<dbReference type="InterPro" id="IPR028599">
    <property type="entry name" value="WDR12/Ytm1"/>
</dbReference>
<dbReference type="PANTHER" id="PTHR19855:SF11">
    <property type="entry name" value="RIBOSOME BIOGENESIS PROTEIN WDR12"/>
    <property type="match status" value="1"/>
</dbReference>
<dbReference type="PANTHER" id="PTHR19855">
    <property type="entry name" value="WD40 REPEAT PROTEIN 12, 37"/>
    <property type="match status" value="1"/>
</dbReference>
<dbReference type="Pfam" id="PF08154">
    <property type="entry name" value="NLE"/>
    <property type="match status" value="1"/>
</dbReference>
<dbReference type="Pfam" id="PF00400">
    <property type="entry name" value="WD40"/>
    <property type="match status" value="6"/>
</dbReference>
<dbReference type="PRINTS" id="PR00320">
    <property type="entry name" value="GPROTEINBRPT"/>
</dbReference>
<dbReference type="SMART" id="SM00320">
    <property type="entry name" value="WD40"/>
    <property type="match status" value="7"/>
</dbReference>
<dbReference type="SUPFAM" id="SSF50978">
    <property type="entry name" value="WD40 repeat-like"/>
    <property type="match status" value="1"/>
</dbReference>
<dbReference type="PROSITE" id="PS00678">
    <property type="entry name" value="WD_REPEATS_1"/>
    <property type="match status" value="2"/>
</dbReference>
<dbReference type="PROSITE" id="PS50082">
    <property type="entry name" value="WD_REPEATS_2"/>
    <property type="match status" value="6"/>
</dbReference>
<dbReference type="PROSITE" id="PS50294">
    <property type="entry name" value="WD_REPEATS_REGION"/>
    <property type="match status" value="1"/>
</dbReference>
<gene>
    <name type="ORF">ISCW009002</name>
</gene>
<protein>
    <recommendedName>
        <fullName evidence="1">Ribosome biogenesis protein WDR12 homolog</fullName>
    </recommendedName>
</protein>
<organism>
    <name type="scientific">Ixodes scapularis</name>
    <name type="common">Black-legged tick</name>
    <name type="synonym">Deer tick</name>
    <dbReference type="NCBI Taxonomy" id="6945"/>
    <lineage>
        <taxon>Eukaryota</taxon>
        <taxon>Metazoa</taxon>
        <taxon>Ecdysozoa</taxon>
        <taxon>Arthropoda</taxon>
        <taxon>Chelicerata</taxon>
        <taxon>Arachnida</taxon>
        <taxon>Acari</taxon>
        <taxon>Parasitiformes</taxon>
        <taxon>Ixodida</taxon>
        <taxon>Ixodoidea</taxon>
        <taxon>Ixodidae</taxon>
        <taxon>Ixodinae</taxon>
        <taxon>Ixodes</taxon>
    </lineage>
</organism>
<evidence type="ECO:0000255" key="1">
    <source>
        <dbReference type="HAMAP-Rule" id="MF_03029"/>
    </source>
</evidence>
<evidence type="ECO:0000256" key="2">
    <source>
        <dbReference type="SAM" id="MobiDB-lite"/>
    </source>
</evidence>